<accession>Q9LA60</accession>
<dbReference type="EMBL" id="AF151091">
    <property type="protein sequence ID" value="AAF63234.1"/>
    <property type="molecule type" value="Genomic_DNA"/>
</dbReference>
<dbReference type="RefSeq" id="WP_054518593.1">
    <property type="nucleotide sequence ID" value="NZ_CBCRYS010000119.1"/>
</dbReference>
<dbReference type="SMR" id="Q9LA60"/>
<dbReference type="GO" id="GO:0009279">
    <property type="term" value="C:cell outer membrane"/>
    <property type="evidence" value="ECO:0007669"/>
    <property type="project" value="UniProtKB-SubCell"/>
</dbReference>
<dbReference type="GO" id="GO:0009986">
    <property type="term" value="C:cell surface"/>
    <property type="evidence" value="ECO:0007669"/>
    <property type="project" value="UniProtKB-SubCell"/>
</dbReference>
<dbReference type="GO" id="GO:0046819">
    <property type="term" value="P:protein secretion by the type V secretion system"/>
    <property type="evidence" value="ECO:0000315"/>
    <property type="project" value="UniProtKB"/>
</dbReference>
<dbReference type="Gene3D" id="6.10.250.1980">
    <property type="match status" value="1"/>
</dbReference>
<dbReference type="Gene3D" id="3.30.1300.30">
    <property type="entry name" value="GSPII I/J protein-like"/>
    <property type="match status" value="1"/>
</dbReference>
<dbReference type="InterPro" id="IPR045584">
    <property type="entry name" value="Pilin-like"/>
</dbReference>
<dbReference type="InterPro" id="IPR005594">
    <property type="entry name" value="YadA_C"/>
</dbReference>
<dbReference type="Pfam" id="PF03895">
    <property type="entry name" value="YadA_anchor"/>
    <property type="match status" value="1"/>
</dbReference>
<dbReference type="SUPFAM" id="SSF54523">
    <property type="entry name" value="Pili subunits"/>
    <property type="match status" value="1"/>
</dbReference>
<protein>
    <recommendedName>
        <fullName evidence="7">Immunoglobulin-binding protein EibA</fullName>
    </recommendedName>
    <alternativeName>
        <fullName>Trimeric autotransporter adhesin EibA</fullName>
        <shortName evidence="8">TAA EibA</shortName>
    </alternativeName>
    <alternativeName>
        <fullName>Type 5 secretion system autotransporter EibA</fullName>
    </alternativeName>
</protein>
<comment type="function">
    <text evidence="4 5">Binds (in a non-immune fashion) to the Fc portion of human IgG but not IgA; binding occurs on the cell surface. Confers the ability to survive exposure to human serum exposure (PubMed:10722621). Binds to the Fc portion of human IgG and to whole mouse antibodies also via Fc, binds more than 1 Fc or IgG (PubMed:19303642).</text>
</comment>
<comment type="subunit">
    <text evidence="4 5 6">Homotrimer; can probably form mixed heterotrimers in vivo (PubMed:22155776). Will form mixed heterotrimers with EibD; these are correctly located in the outer membrane and bind IgG Fc, although less well than homotrimers. Does not form trimers with distantly related YadA from Y.enterocolitica; coexpression was lethal and one of the genes is eliminated in vivo. If the full translocator domain (299-392) is exchanged with that of YadA ('368-455'), will form heterotrimers with YadA and vice-versa (PubMed:22155776). In denaturing gels runs as 2 bands of about 121 and 131 kDa; extracting the sample with 88% phenol at 70 degrees Celsius reduces part of the signal to about 45 kDa (PubMed:10722621). Binds the Fc portion of IgG; binds more than 1 Fc per subunit (PubMed:19303642).</text>
</comment>
<comment type="subcellular location">
    <subcellularLocation>
        <location evidence="6 9 10">Cell surface</location>
    </subcellularLocation>
    <subcellularLocation>
        <location evidence="6 9">Cell outer membrane</location>
    </subcellularLocation>
    <text evidence="6 9 10">The C-terminal translocator domain is localized in the outer membrane and the passenger domain is at the cell surface.</text>
</comment>
<comment type="induction">
    <text evidence="4">In strain ECOR 9 expression is greater at 37 than 27 degrees Celsius and increases upon entry into stationary phase (at protein level). Upon expression from a plasmid in strain AB1157 (with its own leader sequence) more protein is seen at 37 than 27 degrees Celsius (at protein level).</text>
</comment>
<comment type="domain">
    <text evidence="1 2 6">The signal peptide, cleaved at the inner membrane, guides the autotransporter protein to the periplasmic space (By similarity). Then, trimerization and insertion of the C-terminal translocator domain in the outer membrane forms a hydrophilic pore for the translocation of the passenger domain to the bacterial cell surface (PubMed:22155776). Trimerizes to make a lollipop-shaped form which consists of three domains: a C-terminal membrane-anchor domain, an extended coiled-coil stalk domain which binds IgG Fc, and an N-terminal head domain (By similarity).</text>
</comment>
<comment type="miscellaneous">
    <text evidence="4">Encoded in an Atlas prophage region of strain ECOR 9, upon UV treatment bacteriophage containing this gene can be isolated.</text>
</comment>
<comment type="similarity">
    <text evidence="8">Belongs to the autotransporter-2 (AT-2) (TC 1.B.40) family. Eib subfamily.</text>
</comment>
<feature type="signal peptide" evidence="3">
    <location>
        <begin position="1"/>
        <end position="27"/>
    </location>
</feature>
<feature type="chain" id="PRO_0000450746" description="Immunoglobulin-binding protein EibA">
    <location>
        <begin position="28"/>
        <end position="392"/>
    </location>
</feature>
<feature type="topological domain" description="Extracellular" evidence="6">
    <location>
        <begin position="28"/>
        <end position="341"/>
    </location>
</feature>
<feature type="transmembrane region" description="Beta stranded" evidence="2">
    <location>
        <begin position="342"/>
        <end position="352"/>
    </location>
</feature>
<feature type="transmembrane region" description="Beta stranded" evidence="2">
    <location>
        <begin position="355"/>
        <end position="366"/>
    </location>
</feature>
<feature type="transmembrane region" description="Beta stranded" evidence="2">
    <location>
        <begin position="369"/>
        <end position="378"/>
    </location>
</feature>
<feature type="transmembrane region" description="Beta stranded" evidence="2">
    <location>
        <begin position="382"/>
        <end position="392"/>
    </location>
</feature>
<feature type="region of interest" description="Surface exposed passenger domain" evidence="1">
    <location>
        <begin position="28"/>
        <end position="301"/>
    </location>
</feature>
<feature type="region of interest" description="Right-handed coiled-coil (RHcc)" evidence="2">
    <location>
        <begin position="187"/>
        <end position="230"/>
    </location>
</feature>
<feature type="region of interest" description="Saddle domain" evidence="2">
    <location>
        <begin position="231"/>
        <end position="256"/>
    </location>
</feature>
<feature type="region of interest" description="Left-handed coiled-coil (LHcc)" evidence="2">
    <location>
        <begin position="257"/>
        <end position="322"/>
    </location>
</feature>
<feature type="region of interest" description="Outer membrane translocation of the passenger domain" evidence="2">
    <location>
        <begin position="299"/>
        <end position="341"/>
    </location>
</feature>
<feature type="region of interest" description="Translocator domain" evidence="2">
    <location>
        <begin position="342"/>
        <end position="392"/>
    </location>
</feature>
<feature type="coiled-coil region" evidence="3">
    <location>
        <begin position="174"/>
        <end position="215"/>
    </location>
</feature>
<keyword id="KW-0998">Cell outer membrane</keyword>
<keyword id="KW-0175">Coiled coil</keyword>
<keyword id="KW-0472">Membrane</keyword>
<keyword id="KW-0653">Protein transport</keyword>
<keyword id="KW-0732">Signal</keyword>
<keyword id="KW-0812">Transmembrane</keyword>
<keyword id="KW-1134">Transmembrane beta strand</keyword>
<keyword id="KW-0813">Transport</keyword>
<keyword id="KW-0843">Virulence</keyword>
<proteinExistence type="evidence at protein level"/>
<evidence type="ECO:0000250" key="1">
    <source>
        <dbReference type="UniProtKB" id="P0C2W0"/>
    </source>
</evidence>
<evidence type="ECO:0000250" key="2">
    <source>
        <dbReference type="UniProtKB" id="Q9MCI8"/>
    </source>
</evidence>
<evidence type="ECO:0000255" key="3"/>
<evidence type="ECO:0000269" key="4">
    <source>
    </source>
</evidence>
<evidence type="ECO:0000269" key="5">
    <source>
    </source>
</evidence>
<evidence type="ECO:0000269" key="6">
    <source>
    </source>
</evidence>
<evidence type="ECO:0000303" key="7">
    <source>
    </source>
</evidence>
<evidence type="ECO:0000305" key="8"/>
<evidence type="ECO:0000305" key="9">
    <source>
    </source>
</evidence>
<evidence type="ECO:0000305" key="10">
    <source>
    </source>
</evidence>
<reference key="1">
    <citation type="journal article" date="2000" name="Infect. Immun.">
        <title>Four different genes responsible for nonimmune immunoglobulin-binding activities within a single strain of Escherichia coli.</title>
        <authorList>
            <person name="Sandt C.H."/>
            <person name="Hill C.W."/>
        </authorList>
    </citation>
    <scope>NUCLEOTIDE SEQUENCE [GENOMIC DNA]</scope>
    <scope>FUNCTION</scope>
    <scope>BINDING TO HUMAN IGA AND IGG</scope>
    <scope>SUBUNIT</scope>
    <scope>SUBCELLULAR LOCATION</scope>
    <scope>INDUCTION</scope>
    <source>
        <strain>ATCC 35328 / ECOR 9</strain>
    </source>
</reference>
<reference key="2">
    <citation type="journal article" date="2009" name="Mol. Immunol.">
        <title>The immunoglobulin-binding Eib proteins from Escherichia coli are receptors for IgG Fc.</title>
        <authorList>
            <person name="Leo J.C."/>
            <person name="Goldman A."/>
        </authorList>
    </citation>
    <scope>FUNCTION</scope>
    <scope>BINDING TO HUMAN IGG</scope>
    <scope>SUBUNIT</scope>
</reference>
<reference key="3">
    <citation type="journal article" date="2012" name="J. Bacteriol.">
        <title>The translocation domain in trimeric autotransporter adhesins is necessary and sufficient for trimerization and autotransportation.</title>
        <authorList>
            <person name="Mikula K.M."/>
            <person name="Leo J.C."/>
            <person name="Lyskowski A."/>
            <person name="Kedracka-Krok S."/>
            <person name="Pirog A."/>
            <person name="Goldman A."/>
        </authorList>
    </citation>
    <scope>BINDING TO FC</scope>
    <scope>SUBUNIT</scope>
    <scope>SUBCELLULAR LOCATION</scope>
    <scope>DOMAIN</scope>
    <scope>TOPOLOGY</scope>
</reference>
<organism>
    <name type="scientific">Escherichia coli</name>
    <dbReference type="NCBI Taxonomy" id="562"/>
    <lineage>
        <taxon>Bacteria</taxon>
        <taxon>Pseudomonadati</taxon>
        <taxon>Pseudomonadota</taxon>
        <taxon>Gammaproteobacteria</taxon>
        <taxon>Enterobacterales</taxon>
        <taxon>Enterobacteriaceae</taxon>
        <taxon>Escherichia</taxon>
    </lineage>
</organism>
<sequence>MSKKFTKAVLSAAMAGVLFGVSFDIMAAEQSYSALNAQNGAGSIYKVYYNPDNKTAHIDWGGLGDVEKERNKPIPLLSKIDGNGNVTITSADGSTTFTVYDKEVHDFMKAAASGKTDDIKTNLLTEQNIRDLYNRVSAIQQMETNVGLDEYGNVAVTPNEIKERVSLQRYLAWESANSTIVANELEAQKGKLDAQKGELEAQKKNLGELTTRTDKIDAAAAATAAKVESRTLVGVSSDGTLTRAEGAKNTISVNDGLVALSGRTDRIDAAVGAIDGRVTRNTQSIEKNSKAIAANTRTLQQHSARLDSQQRQINENHKEMKRAAAQSAALTGLFQPYSVGKFNASAAVGGYSDEQALAVGVGYRFNEQTAAKAGVAFSDGDASWNVGVNFEF</sequence>
<name>EIBA_ECOLX</name>
<gene>
    <name evidence="7" type="primary">eibA</name>
</gene>